<accession>A6UVA1</accession>
<reference key="1">
    <citation type="submission" date="2007-06" db="EMBL/GenBank/DDBJ databases">
        <title>Complete sequence of Methanococcus aeolicus Nankai-3.</title>
        <authorList>
            <consortium name="US DOE Joint Genome Institute"/>
            <person name="Copeland A."/>
            <person name="Lucas S."/>
            <person name="Lapidus A."/>
            <person name="Barry K."/>
            <person name="Glavina del Rio T."/>
            <person name="Dalin E."/>
            <person name="Tice H."/>
            <person name="Pitluck S."/>
            <person name="Chain P."/>
            <person name="Malfatti S."/>
            <person name="Shin M."/>
            <person name="Vergez L."/>
            <person name="Schmutz J."/>
            <person name="Larimer F."/>
            <person name="Land M."/>
            <person name="Hauser L."/>
            <person name="Kyrpides N."/>
            <person name="Lykidis A."/>
            <person name="Sieprawska-Lupa M."/>
            <person name="Whitman W.B."/>
            <person name="Richardson P."/>
        </authorList>
    </citation>
    <scope>NUCLEOTIDE SEQUENCE [LARGE SCALE GENOMIC DNA]</scope>
    <source>
        <strain>ATCC BAA-1280 / DSM 17508 / OCM 812 / Nankai-3</strain>
    </source>
</reference>
<name>Y841_META3</name>
<comment type="similarity">
    <text evidence="1">Belongs to the UPF0235 family.</text>
</comment>
<organism>
    <name type="scientific">Methanococcus aeolicus (strain ATCC BAA-1280 / DSM 17508 / OCM 812 / Nankai-3)</name>
    <dbReference type="NCBI Taxonomy" id="419665"/>
    <lineage>
        <taxon>Archaea</taxon>
        <taxon>Methanobacteriati</taxon>
        <taxon>Methanobacteriota</taxon>
        <taxon>Methanomada group</taxon>
        <taxon>Methanococci</taxon>
        <taxon>Methanococcales</taxon>
        <taxon>Methanococcaceae</taxon>
        <taxon>Methanococcus</taxon>
    </lineage>
</organism>
<evidence type="ECO:0000255" key="1">
    <source>
        <dbReference type="HAMAP-Rule" id="MF_00634"/>
    </source>
</evidence>
<protein>
    <recommendedName>
        <fullName evidence="1">UPF0235 protein Maeo_0841</fullName>
    </recommendedName>
</protein>
<proteinExistence type="inferred from homology"/>
<sequence>MINEIIRESKDKNGILIDVEISSNAKKNEIGEINEWRKRLIIKIKALPVDGKANKEIAKFFKKTFGKDIIIVSGLTSSQKTICVIGATKDEIIDKILKNNI</sequence>
<feature type="chain" id="PRO_1000056769" description="UPF0235 protein Maeo_0841">
    <location>
        <begin position="1"/>
        <end position="101"/>
    </location>
</feature>
<dbReference type="EMBL" id="CP000743">
    <property type="protein sequence ID" value="ABR56423.1"/>
    <property type="molecule type" value="Genomic_DNA"/>
</dbReference>
<dbReference type="RefSeq" id="WP_011973555.1">
    <property type="nucleotide sequence ID" value="NC_009635.1"/>
</dbReference>
<dbReference type="SMR" id="A6UVA1"/>
<dbReference type="STRING" id="419665.Maeo_0841"/>
<dbReference type="GeneID" id="5326514"/>
<dbReference type="KEGG" id="mae:Maeo_0841"/>
<dbReference type="eggNOG" id="arCOG04058">
    <property type="taxonomic scope" value="Archaea"/>
</dbReference>
<dbReference type="HOGENOM" id="CLU_130694_6_1_2"/>
<dbReference type="OrthoDB" id="53248at2157"/>
<dbReference type="Proteomes" id="UP000001106">
    <property type="component" value="Chromosome"/>
</dbReference>
<dbReference type="GO" id="GO:0005737">
    <property type="term" value="C:cytoplasm"/>
    <property type="evidence" value="ECO:0007669"/>
    <property type="project" value="TreeGrafter"/>
</dbReference>
<dbReference type="Gene3D" id="3.30.1200.10">
    <property type="entry name" value="YggU-like"/>
    <property type="match status" value="1"/>
</dbReference>
<dbReference type="HAMAP" id="MF_00634">
    <property type="entry name" value="UPF0235"/>
    <property type="match status" value="1"/>
</dbReference>
<dbReference type="InterPro" id="IPR003746">
    <property type="entry name" value="DUF167"/>
</dbReference>
<dbReference type="InterPro" id="IPR036591">
    <property type="entry name" value="YggU-like_sf"/>
</dbReference>
<dbReference type="NCBIfam" id="TIGR00251">
    <property type="entry name" value="DUF167 family protein"/>
    <property type="match status" value="1"/>
</dbReference>
<dbReference type="PANTHER" id="PTHR13420">
    <property type="entry name" value="UPF0235 PROTEIN C15ORF40"/>
    <property type="match status" value="1"/>
</dbReference>
<dbReference type="PANTHER" id="PTHR13420:SF7">
    <property type="entry name" value="UPF0235 PROTEIN C15ORF40"/>
    <property type="match status" value="1"/>
</dbReference>
<dbReference type="Pfam" id="PF02594">
    <property type="entry name" value="DUF167"/>
    <property type="match status" value="1"/>
</dbReference>
<dbReference type="SMART" id="SM01152">
    <property type="entry name" value="DUF167"/>
    <property type="match status" value="1"/>
</dbReference>
<dbReference type="SUPFAM" id="SSF69786">
    <property type="entry name" value="YggU-like"/>
    <property type="match status" value="1"/>
</dbReference>
<gene>
    <name type="ordered locus">Maeo_0841</name>
</gene>